<keyword id="KW-0488">Methylation</keyword>
<keyword id="KW-1185">Reference proteome</keyword>
<keyword id="KW-0687">Ribonucleoprotein</keyword>
<keyword id="KW-0689">Ribosomal protein</keyword>
<keyword id="KW-0694">RNA-binding</keyword>
<keyword id="KW-0699">rRNA-binding</keyword>
<keyword id="KW-0820">tRNA-binding</keyword>
<reference key="1">
    <citation type="journal article" date="2009" name="Genome Res.">
        <title>Complete genome of the cellulolytic thermophile Acidothermus cellulolyticus 11B provides insights into its ecophysiological and evolutionary adaptations.</title>
        <authorList>
            <person name="Barabote R.D."/>
            <person name="Xie G."/>
            <person name="Leu D.H."/>
            <person name="Normand P."/>
            <person name="Necsulea A."/>
            <person name="Daubin V."/>
            <person name="Medigue C."/>
            <person name="Adney W.S."/>
            <person name="Xu X.C."/>
            <person name="Lapidus A."/>
            <person name="Parales R.E."/>
            <person name="Detter C."/>
            <person name="Pujic P."/>
            <person name="Bruce D."/>
            <person name="Lavire C."/>
            <person name="Challacombe J.F."/>
            <person name="Brettin T.S."/>
            <person name="Berry A.M."/>
        </authorList>
    </citation>
    <scope>NUCLEOTIDE SEQUENCE [LARGE SCALE GENOMIC DNA]</scope>
    <source>
        <strain>ATCC 43068 / DSM 8971 / 11B</strain>
    </source>
</reference>
<comment type="function">
    <text evidence="2">With S4 and S5 plays an important role in translational accuracy.</text>
</comment>
<comment type="function">
    <text evidence="2">Interacts with and stabilizes bases of the 16S rRNA that are involved in tRNA selection in the A site and with the mRNA backbone. Located at the interface of the 30S and 50S subunits, it traverses the body of the 30S subunit contacting proteins on the other side and probably holding the rRNA structure together. The combined cluster of proteins S8, S12 and S17 appears to hold together the shoulder and platform of the 30S subunit.</text>
</comment>
<comment type="subunit">
    <text evidence="2">Part of the 30S ribosomal subunit. Contacts proteins S8 and S17. May interact with IF1 in the 30S initiation complex.</text>
</comment>
<comment type="similarity">
    <text evidence="2">Belongs to the universal ribosomal protein uS12 family.</text>
</comment>
<dbReference type="EMBL" id="CP000481">
    <property type="protein sequence ID" value="ABK52075.1"/>
    <property type="molecule type" value="Genomic_DNA"/>
</dbReference>
<dbReference type="RefSeq" id="WP_011719138.1">
    <property type="nucleotide sequence ID" value="NC_008578.1"/>
</dbReference>
<dbReference type="SMR" id="A0LRL5"/>
<dbReference type="FunCoup" id="A0LRL5">
    <property type="interactions" value="283"/>
</dbReference>
<dbReference type="STRING" id="351607.Acel_0301"/>
<dbReference type="KEGG" id="ace:Acel_0301"/>
<dbReference type="eggNOG" id="COG0048">
    <property type="taxonomic scope" value="Bacteria"/>
</dbReference>
<dbReference type="HOGENOM" id="CLU_104295_1_2_11"/>
<dbReference type="InParanoid" id="A0LRL5"/>
<dbReference type="OrthoDB" id="9802366at2"/>
<dbReference type="Proteomes" id="UP000008221">
    <property type="component" value="Chromosome"/>
</dbReference>
<dbReference type="GO" id="GO:0015935">
    <property type="term" value="C:small ribosomal subunit"/>
    <property type="evidence" value="ECO:0007669"/>
    <property type="project" value="InterPro"/>
</dbReference>
<dbReference type="GO" id="GO:0019843">
    <property type="term" value="F:rRNA binding"/>
    <property type="evidence" value="ECO:0007669"/>
    <property type="project" value="UniProtKB-UniRule"/>
</dbReference>
<dbReference type="GO" id="GO:0003735">
    <property type="term" value="F:structural constituent of ribosome"/>
    <property type="evidence" value="ECO:0007669"/>
    <property type="project" value="InterPro"/>
</dbReference>
<dbReference type="GO" id="GO:0000049">
    <property type="term" value="F:tRNA binding"/>
    <property type="evidence" value="ECO:0007669"/>
    <property type="project" value="UniProtKB-UniRule"/>
</dbReference>
<dbReference type="GO" id="GO:0006412">
    <property type="term" value="P:translation"/>
    <property type="evidence" value="ECO:0007669"/>
    <property type="project" value="UniProtKB-UniRule"/>
</dbReference>
<dbReference type="CDD" id="cd03368">
    <property type="entry name" value="Ribosomal_S12"/>
    <property type="match status" value="1"/>
</dbReference>
<dbReference type="FunFam" id="2.40.50.140:FF:000001">
    <property type="entry name" value="30S ribosomal protein S12"/>
    <property type="match status" value="1"/>
</dbReference>
<dbReference type="Gene3D" id="2.40.50.140">
    <property type="entry name" value="Nucleic acid-binding proteins"/>
    <property type="match status" value="1"/>
</dbReference>
<dbReference type="HAMAP" id="MF_00403_B">
    <property type="entry name" value="Ribosomal_uS12_B"/>
    <property type="match status" value="1"/>
</dbReference>
<dbReference type="InterPro" id="IPR012340">
    <property type="entry name" value="NA-bd_OB-fold"/>
</dbReference>
<dbReference type="InterPro" id="IPR006032">
    <property type="entry name" value="Ribosomal_uS12"/>
</dbReference>
<dbReference type="InterPro" id="IPR005679">
    <property type="entry name" value="Ribosomal_uS12_bac"/>
</dbReference>
<dbReference type="NCBIfam" id="TIGR00981">
    <property type="entry name" value="rpsL_bact"/>
    <property type="match status" value="1"/>
</dbReference>
<dbReference type="PANTHER" id="PTHR11652">
    <property type="entry name" value="30S RIBOSOMAL PROTEIN S12 FAMILY MEMBER"/>
    <property type="match status" value="1"/>
</dbReference>
<dbReference type="Pfam" id="PF00164">
    <property type="entry name" value="Ribosom_S12_S23"/>
    <property type="match status" value="1"/>
</dbReference>
<dbReference type="PIRSF" id="PIRSF002133">
    <property type="entry name" value="Ribosomal_S12/S23"/>
    <property type="match status" value="1"/>
</dbReference>
<dbReference type="PRINTS" id="PR01034">
    <property type="entry name" value="RIBOSOMALS12"/>
</dbReference>
<dbReference type="SUPFAM" id="SSF50249">
    <property type="entry name" value="Nucleic acid-binding proteins"/>
    <property type="match status" value="1"/>
</dbReference>
<dbReference type="PROSITE" id="PS00055">
    <property type="entry name" value="RIBOSOMAL_S12"/>
    <property type="match status" value="1"/>
</dbReference>
<protein>
    <recommendedName>
        <fullName evidence="2">Small ribosomal subunit protein uS12</fullName>
    </recommendedName>
    <alternativeName>
        <fullName evidence="4">30S ribosomal protein S12</fullName>
    </alternativeName>
</protein>
<organism>
    <name type="scientific">Acidothermus cellulolyticus (strain ATCC 43068 / DSM 8971 / 11B)</name>
    <dbReference type="NCBI Taxonomy" id="351607"/>
    <lineage>
        <taxon>Bacteria</taxon>
        <taxon>Bacillati</taxon>
        <taxon>Actinomycetota</taxon>
        <taxon>Actinomycetes</taxon>
        <taxon>Acidothermales</taxon>
        <taxon>Acidothermaceae</taxon>
        <taxon>Acidothermus</taxon>
    </lineage>
</organism>
<gene>
    <name evidence="2" type="primary">rpsL</name>
    <name type="ordered locus">Acel_0301</name>
</gene>
<proteinExistence type="inferred from homology"/>
<name>RS12_ACIC1</name>
<sequence>MPTIQQLVRKGRQAKASKTKTPALKGSPQRRGVCTRVYTTTPKKPNSALRKVARVRLTSGVEVTAYIPGVGHNLQEHSIVLVRGGRVKDLPGVRYKIIRGSLDTQGVRNRKQGRSRYGAKKEKS</sequence>
<accession>A0LRL5</accession>
<feature type="chain" id="PRO_0000295942" description="Small ribosomal subunit protein uS12">
    <location>
        <begin position="1"/>
        <end position="124"/>
    </location>
</feature>
<feature type="region of interest" description="Disordered" evidence="3">
    <location>
        <begin position="1"/>
        <end position="32"/>
    </location>
</feature>
<feature type="compositionally biased region" description="Basic residues" evidence="3">
    <location>
        <begin position="9"/>
        <end position="18"/>
    </location>
</feature>
<feature type="modified residue" description="3-methylthioaspartic acid" evidence="1">
    <location>
        <position position="89"/>
    </location>
</feature>
<evidence type="ECO:0000250" key="1"/>
<evidence type="ECO:0000255" key="2">
    <source>
        <dbReference type="HAMAP-Rule" id="MF_00403"/>
    </source>
</evidence>
<evidence type="ECO:0000256" key="3">
    <source>
        <dbReference type="SAM" id="MobiDB-lite"/>
    </source>
</evidence>
<evidence type="ECO:0000305" key="4"/>